<sequence>MPVITLPDGSQRHYDHPVSPMDVALDIGPGLAKATIAGRVNGELVDASDLIENDATLSIITAKDEEGLEIIRHSCAHLLGHAIKQLWPHTKMAIGPVVDNGFYYDVDLDRTLTQEDVEALEKRMHELAEKNYDVIKKKVSWHEARETFVKRGESYKVSILDENIAHDDKPGLYHHEEYVDMCRGPHVPNMRFCHHFKLMKTAGAYWRGDSNNKMLQRIYGTAWADKKALNAYLQRLEEAAKRDHRKIGKQLDLYHMQEEAPGMVFWHNDGWTIFRELEVFVRSKLKEYQYQEVKGPFMMDRVLWEKTGHWDNYKDAMFTTSSENREYCIKPMNCPGHVQIFNQGLKSYRDLPLRMAEFGSCHRNEPSGALHGLMRVRGFTQDDAHIFCTEEQIRDEVNACIRMVYDMYSTFGFEKIVVKLSTRPDKRIGSDEMWDRAEADLAVALEENNIPFEYQLGEGAFYGPKIEFTLYDCLDRAWQCGTVQLDFSLPSRLSASYVGEDNERKVPVIIHRAILGSMERFIGILTEEFAGFFPTWLAPVQVVVMNITDSQSEYVNELTQKLQNAGIRVKADLRNEKIGFKIREHTLRRVPYMLVCGDKEVEAGKVAVRTRRGKDLGSLDVNDVIEKLQQEIRSRSLQQLEE</sequence>
<accession>B5BA42</accession>
<keyword id="KW-0030">Aminoacyl-tRNA synthetase</keyword>
<keyword id="KW-0067">ATP-binding</keyword>
<keyword id="KW-0963">Cytoplasm</keyword>
<keyword id="KW-0436">Ligase</keyword>
<keyword id="KW-0479">Metal-binding</keyword>
<keyword id="KW-0547">Nucleotide-binding</keyword>
<keyword id="KW-0648">Protein biosynthesis</keyword>
<keyword id="KW-0694">RNA-binding</keyword>
<keyword id="KW-0820">tRNA-binding</keyword>
<keyword id="KW-0862">Zinc</keyword>
<name>SYT_SALPK</name>
<reference key="1">
    <citation type="journal article" date="2009" name="BMC Genomics">
        <title>Pseudogene accumulation in the evolutionary histories of Salmonella enterica serovars Paratyphi A and Typhi.</title>
        <authorList>
            <person name="Holt K.E."/>
            <person name="Thomson N.R."/>
            <person name="Wain J."/>
            <person name="Langridge G.C."/>
            <person name="Hasan R."/>
            <person name="Bhutta Z.A."/>
            <person name="Quail M.A."/>
            <person name="Norbertczak H."/>
            <person name="Walker D."/>
            <person name="Simmonds M."/>
            <person name="White B."/>
            <person name="Bason N."/>
            <person name="Mungall K."/>
            <person name="Dougan G."/>
            <person name="Parkhill J."/>
        </authorList>
    </citation>
    <scope>NUCLEOTIDE SEQUENCE [LARGE SCALE GENOMIC DNA]</scope>
    <source>
        <strain>AKU_12601</strain>
    </source>
</reference>
<comment type="function">
    <text evidence="1">Catalyzes the attachment of threonine to tRNA(Thr) in a two-step reaction: L-threonine is first activated by ATP to form Thr-AMP and then transferred to the acceptor end of tRNA(Thr). Also edits incorrectly charged L-seryl-tRNA(Thr).</text>
</comment>
<comment type="catalytic activity">
    <reaction evidence="1">
        <text>tRNA(Thr) + L-threonine + ATP = L-threonyl-tRNA(Thr) + AMP + diphosphate + H(+)</text>
        <dbReference type="Rhea" id="RHEA:24624"/>
        <dbReference type="Rhea" id="RHEA-COMP:9670"/>
        <dbReference type="Rhea" id="RHEA-COMP:9704"/>
        <dbReference type="ChEBI" id="CHEBI:15378"/>
        <dbReference type="ChEBI" id="CHEBI:30616"/>
        <dbReference type="ChEBI" id="CHEBI:33019"/>
        <dbReference type="ChEBI" id="CHEBI:57926"/>
        <dbReference type="ChEBI" id="CHEBI:78442"/>
        <dbReference type="ChEBI" id="CHEBI:78534"/>
        <dbReference type="ChEBI" id="CHEBI:456215"/>
        <dbReference type="EC" id="6.1.1.3"/>
    </reaction>
</comment>
<comment type="cofactor">
    <cofactor evidence="1">
        <name>Zn(2+)</name>
        <dbReference type="ChEBI" id="CHEBI:29105"/>
    </cofactor>
    <text evidence="1">Binds 1 zinc ion per subunit.</text>
</comment>
<comment type="subunit">
    <text evidence="1">Homodimer.</text>
</comment>
<comment type="subcellular location">
    <subcellularLocation>
        <location evidence="1">Cytoplasm</location>
    </subcellularLocation>
</comment>
<comment type="similarity">
    <text evidence="1">Belongs to the class-II aminoacyl-tRNA synthetase family.</text>
</comment>
<organism>
    <name type="scientific">Salmonella paratyphi A (strain AKU_12601)</name>
    <dbReference type="NCBI Taxonomy" id="554290"/>
    <lineage>
        <taxon>Bacteria</taxon>
        <taxon>Pseudomonadati</taxon>
        <taxon>Pseudomonadota</taxon>
        <taxon>Gammaproteobacteria</taxon>
        <taxon>Enterobacterales</taxon>
        <taxon>Enterobacteriaceae</taxon>
        <taxon>Salmonella</taxon>
    </lineage>
</organism>
<protein>
    <recommendedName>
        <fullName evidence="1">Threonine--tRNA ligase</fullName>
        <ecNumber evidence="1">6.1.1.3</ecNumber>
    </recommendedName>
    <alternativeName>
        <fullName evidence="1">Threonyl-tRNA synthetase</fullName>
        <shortName evidence="1">ThrRS</shortName>
    </alternativeName>
</protein>
<gene>
    <name evidence="1" type="primary">thrS</name>
    <name type="ordered locus">SSPA1402</name>
</gene>
<evidence type="ECO:0000255" key="1">
    <source>
        <dbReference type="HAMAP-Rule" id="MF_00184"/>
    </source>
</evidence>
<evidence type="ECO:0000255" key="2">
    <source>
        <dbReference type="PROSITE-ProRule" id="PRU01228"/>
    </source>
</evidence>
<feature type="chain" id="PRO_1000098611" description="Threonine--tRNA ligase">
    <location>
        <begin position="1"/>
        <end position="642"/>
    </location>
</feature>
<feature type="domain" description="TGS" evidence="2">
    <location>
        <begin position="1"/>
        <end position="61"/>
    </location>
</feature>
<feature type="region of interest" description="Catalytic" evidence="1">
    <location>
        <begin position="243"/>
        <end position="534"/>
    </location>
</feature>
<feature type="binding site" evidence="1">
    <location>
        <position position="334"/>
    </location>
    <ligand>
        <name>Zn(2+)</name>
        <dbReference type="ChEBI" id="CHEBI:29105"/>
    </ligand>
</feature>
<feature type="binding site" evidence="1">
    <location>
        <position position="385"/>
    </location>
    <ligand>
        <name>Zn(2+)</name>
        <dbReference type="ChEBI" id="CHEBI:29105"/>
    </ligand>
</feature>
<feature type="binding site" evidence="1">
    <location>
        <position position="511"/>
    </location>
    <ligand>
        <name>Zn(2+)</name>
        <dbReference type="ChEBI" id="CHEBI:29105"/>
    </ligand>
</feature>
<proteinExistence type="inferred from homology"/>
<dbReference type="EC" id="6.1.1.3" evidence="1"/>
<dbReference type="EMBL" id="FM200053">
    <property type="protein sequence ID" value="CAR59581.1"/>
    <property type="molecule type" value="Genomic_DNA"/>
</dbReference>
<dbReference type="RefSeq" id="WP_001144225.1">
    <property type="nucleotide sequence ID" value="NC_011147.1"/>
</dbReference>
<dbReference type="SMR" id="B5BA42"/>
<dbReference type="KEGG" id="sek:SSPA1402"/>
<dbReference type="HOGENOM" id="CLU_008554_0_1_6"/>
<dbReference type="Proteomes" id="UP000001869">
    <property type="component" value="Chromosome"/>
</dbReference>
<dbReference type="GO" id="GO:0005829">
    <property type="term" value="C:cytosol"/>
    <property type="evidence" value="ECO:0007669"/>
    <property type="project" value="TreeGrafter"/>
</dbReference>
<dbReference type="GO" id="GO:0005524">
    <property type="term" value="F:ATP binding"/>
    <property type="evidence" value="ECO:0007669"/>
    <property type="project" value="UniProtKB-UniRule"/>
</dbReference>
<dbReference type="GO" id="GO:0046872">
    <property type="term" value="F:metal ion binding"/>
    <property type="evidence" value="ECO:0007669"/>
    <property type="project" value="UniProtKB-KW"/>
</dbReference>
<dbReference type="GO" id="GO:0004829">
    <property type="term" value="F:threonine-tRNA ligase activity"/>
    <property type="evidence" value="ECO:0007669"/>
    <property type="project" value="UniProtKB-UniRule"/>
</dbReference>
<dbReference type="GO" id="GO:0000049">
    <property type="term" value="F:tRNA binding"/>
    <property type="evidence" value="ECO:0007669"/>
    <property type="project" value="UniProtKB-KW"/>
</dbReference>
<dbReference type="GO" id="GO:0006435">
    <property type="term" value="P:threonyl-tRNA aminoacylation"/>
    <property type="evidence" value="ECO:0007669"/>
    <property type="project" value="UniProtKB-UniRule"/>
</dbReference>
<dbReference type="CDD" id="cd01667">
    <property type="entry name" value="TGS_ThrRS"/>
    <property type="match status" value="1"/>
</dbReference>
<dbReference type="CDD" id="cd00860">
    <property type="entry name" value="ThrRS_anticodon"/>
    <property type="match status" value="1"/>
</dbReference>
<dbReference type="CDD" id="cd00771">
    <property type="entry name" value="ThrRS_core"/>
    <property type="match status" value="1"/>
</dbReference>
<dbReference type="FunFam" id="3.10.20.30:FF:000005">
    <property type="entry name" value="Threonine--tRNA ligase"/>
    <property type="match status" value="1"/>
</dbReference>
<dbReference type="FunFam" id="3.30.54.20:FF:000002">
    <property type="entry name" value="Threonine--tRNA ligase"/>
    <property type="match status" value="1"/>
</dbReference>
<dbReference type="FunFam" id="3.30.930.10:FF:000002">
    <property type="entry name" value="Threonine--tRNA ligase"/>
    <property type="match status" value="1"/>
</dbReference>
<dbReference type="FunFam" id="3.40.50.800:FF:000001">
    <property type="entry name" value="Threonine--tRNA ligase"/>
    <property type="match status" value="1"/>
</dbReference>
<dbReference type="FunFam" id="3.30.980.10:FF:000005">
    <property type="entry name" value="Threonyl-tRNA synthetase, mitochondrial"/>
    <property type="match status" value="1"/>
</dbReference>
<dbReference type="Gene3D" id="3.10.20.30">
    <property type="match status" value="1"/>
</dbReference>
<dbReference type="Gene3D" id="3.30.54.20">
    <property type="match status" value="1"/>
</dbReference>
<dbReference type="Gene3D" id="3.40.50.800">
    <property type="entry name" value="Anticodon-binding domain"/>
    <property type="match status" value="1"/>
</dbReference>
<dbReference type="Gene3D" id="3.30.930.10">
    <property type="entry name" value="Bira Bifunctional Protein, Domain 2"/>
    <property type="match status" value="1"/>
</dbReference>
<dbReference type="Gene3D" id="3.30.980.10">
    <property type="entry name" value="Threonyl-trna Synthetase, Chain A, domain 2"/>
    <property type="match status" value="1"/>
</dbReference>
<dbReference type="HAMAP" id="MF_00184">
    <property type="entry name" value="Thr_tRNA_synth"/>
    <property type="match status" value="1"/>
</dbReference>
<dbReference type="InterPro" id="IPR002314">
    <property type="entry name" value="aa-tRNA-synt_IIb"/>
</dbReference>
<dbReference type="InterPro" id="IPR006195">
    <property type="entry name" value="aa-tRNA-synth_II"/>
</dbReference>
<dbReference type="InterPro" id="IPR045864">
    <property type="entry name" value="aa-tRNA-synth_II/BPL/LPL"/>
</dbReference>
<dbReference type="InterPro" id="IPR004154">
    <property type="entry name" value="Anticodon-bd"/>
</dbReference>
<dbReference type="InterPro" id="IPR036621">
    <property type="entry name" value="Anticodon-bd_dom_sf"/>
</dbReference>
<dbReference type="InterPro" id="IPR012675">
    <property type="entry name" value="Beta-grasp_dom_sf"/>
</dbReference>
<dbReference type="InterPro" id="IPR004095">
    <property type="entry name" value="TGS"/>
</dbReference>
<dbReference type="InterPro" id="IPR012676">
    <property type="entry name" value="TGS-like"/>
</dbReference>
<dbReference type="InterPro" id="IPR002320">
    <property type="entry name" value="Thr-tRNA-ligase_IIa"/>
</dbReference>
<dbReference type="InterPro" id="IPR018163">
    <property type="entry name" value="Thr/Ala-tRNA-synth_IIc_edit"/>
</dbReference>
<dbReference type="InterPro" id="IPR047246">
    <property type="entry name" value="ThrRS_anticodon"/>
</dbReference>
<dbReference type="InterPro" id="IPR033728">
    <property type="entry name" value="ThrRS_core"/>
</dbReference>
<dbReference type="InterPro" id="IPR012947">
    <property type="entry name" value="tRNA_SAD"/>
</dbReference>
<dbReference type="NCBIfam" id="TIGR00418">
    <property type="entry name" value="thrS"/>
    <property type="match status" value="1"/>
</dbReference>
<dbReference type="PANTHER" id="PTHR11451:SF44">
    <property type="entry name" value="THREONINE--TRNA LIGASE, CHLOROPLASTIC_MITOCHONDRIAL 2"/>
    <property type="match status" value="1"/>
</dbReference>
<dbReference type="PANTHER" id="PTHR11451">
    <property type="entry name" value="THREONINE-TRNA LIGASE"/>
    <property type="match status" value="1"/>
</dbReference>
<dbReference type="Pfam" id="PF03129">
    <property type="entry name" value="HGTP_anticodon"/>
    <property type="match status" value="1"/>
</dbReference>
<dbReference type="Pfam" id="PF02824">
    <property type="entry name" value="TGS"/>
    <property type="match status" value="1"/>
</dbReference>
<dbReference type="Pfam" id="PF00587">
    <property type="entry name" value="tRNA-synt_2b"/>
    <property type="match status" value="1"/>
</dbReference>
<dbReference type="Pfam" id="PF07973">
    <property type="entry name" value="tRNA_SAD"/>
    <property type="match status" value="1"/>
</dbReference>
<dbReference type="PRINTS" id="PR01047">
    <property type="entry name" value="TRNASYNTHTHR"/>
</dbReference>
<dbReference type="SMART" id="SM00863">
    <property type="entry name" value="tRNA_SAD"/>
    <property type="match status" value="1"/>
</dbReference>
<dbReference type="SUPFAM" id="SSF52954">
    <property type="entry name" value="Class II aaRS ABD-related"/>
    <property type="match status" value="1"/>
</dbReference>
<dbReference type="SUPFAM" id="SSF55681">
    <property type="entry name" value="Class II aaRS and biotin synthetases"/>
    <property type="match status" value="1"/>
</dbReference>
<dbReference type="SUPFAM" id="SSF81271">
    <property type="entry name" value="TGS-like"/>
    <property type="match status" value="1"/>
</dbReference>
<dbReference type="SUPFAM" id="SSF55186">
    <property type="entry name" value="ThrRS/AlaRS common domain"/>
    <property type="match status" value="1"/>
</dbReference>
<dbReference type="PROSITE" id="PS50862">
    <property type="entry name" value="AA_TRNA_LIGASE_II"/>
    <property type="match status" value="1"/>
</dbReference>
<dbReference type="PROSITE" id="PS51880">
    <property type="entry name" value="TGS"/>
    <property type="match status" value="1"/>
</dbReference>